<name>Y3170_YERPE</name>
<gene>
    <name type="ordered locus">YPO3170</name>
    <name type="ordered locus">y1016</name>
    <name type="ordered locus">YP_0761</name>
</gene>
<organism>
    <name type="scientific">Yersinia pestis</name>
    <dbReference type="NCBI Taxonomy" id="632"/>
    <lineage>
        <taxon>Bacteria</taxon>
        <taxon>Pseudomonadati</taxon>
        <taxon>Pseudomonadota</taxon>
        <taxon>Gammaproteobacteria</taxon>
        <taxon>Enterobacterales</taxon>
        <taxon>Yersiniaceae</taxon>
        <taxon>Yersinia</taxon>
    </lineage>
</organism>
<accession>Q8ZC52</accession>
<accession>Q0WCB3</accession>
<accession>Q8D158</accession>
<reference key="1">
    <citation type="journal article" date="2001" name="Nature">
        <title>Genome sequence of Yersinia pestis, the causative agent of plague.</title>
        <authorList>
            <person name="Parkhill J."/>
            <person name="Wren B.W."/>
            <person name="Thomson N.R."/>
            <person name="Titball R.W."/>
            <person name="Holden M.T.G."/>
            <person name="Prentice M.B."/>
            <person name="Sebaihia M."/>
            <person name="James K.D."/>
            <person name="Churcher C.M."/>
            <person name="Mungall K.L."/>
            <person name="Baker S."/>
            <person name="Basham D."/>
            <person name="Bentley S.D."/>
            <person name="Brooks K."/>
            <person name="Cerdeno-Tarraga A.-M."/>
            <person name="Chillingworth T."/>
            <person name="Cronin A."/>
            <person name="Davies R.M."/>
            <person name="Davis P."/>
            <person name="Dougan G."/>
            <person name="Feltwell T."/>
            <person name="Hamlin N."/>
            <person name="Holroyd S."/>
            <person name="Jagels K."/>
            <person name="Karlyshev A.V."/>
            <person name="Leather S."/>
            <person name="Moule S."/>
            <person name="Oyston P.C.F."/>
            <person name="Quail M.A."/>
            <person name="Rutherford K.M."/>
            <person name="Simmonds M."/>
            <person name="Skelton J."/>
            <person name="Stevens K."/>
            <person name="Whitehead S."/>
            <person name="Barrell B.G."/>
        </authorList>
    </citation>
    <scope>NUCLEOTIDE SEQUENCE [LARGE SCALE GENOMIC DNA]</scope>
    <source>
        <strain>CO-92 / Biovar Orientalis</strain>
    </source>
</reference>
<reference key="2">
    <citation type="journal article" date="2002" name="J. Bacteriol.">
        <title>Genome sequence of Yersinia pestis KIM.</title>
        <authorList>
            <person name="Deng W."/>
            <person name="Burland V."/>
            <person name="Plunkett G. III"/>
            <person name="Boutin A."/>
            <person name="Mayhew G.F."/>
            <person name="Liss P."/>
            <person name="Perna N.T."/>
            <person name="Rose D.J."/>
            <person name="Mau B."/>
            <person name="Zhou S."/>
            <person name="Schwartz D.C."/>
            <person name="Fetherston J.D."/>
            <person name="Lindler L.E."/>
            <person name="Brubaker R.R."/>
            <person name="Plano G.V."/>
            <person name="Straley S.C."/>
            <person name="McDonough K.A."/>
            <person name="Nilles M.L."/>
            <person name="Matson J.S."/>
            <person name="Blattner F.R."/>
            <person name="Perry R.D."/>
        </authorList>
    </citation>
    <scope>NUCLEOTIDE SEQUENCE [LARGE SCALE GENOMIC DNA]</scope>
    <source>
        <strain>KIM10+ / Biovar Mediaevalis</strain>
    </source>
</reference>
<reference key="3">
    <citation type="journal article" date="2004" name="DNA Res.">
        <title>Complete genome sequence of Yersinia pestis strain 91001, an isolate avirulent to humans.</title>
        <authorList>
            <person name="Song Y."/>
            <person name="Tong Z."/>
            <person name="Wang J."/>
            <person name="Wang L."/>
            <person name="Guo Z."/>
            <person name="Han Y."/>
            <person name="Zhang J."/>
            <person name="Pei D."/>
            <person name="Zhou D."/>
            <person name="Qin H."/>
            <person name="Pang X."/>
            <person name="Han Y."/>
            <person name="Zhai J."/>
            <person name="Li M."/>
            <person name="Cui B."/>
            <person name="Qi Z."/>
            <person name="Jin L."/>
            <person name="Dai R."/>
            <person name="Chen F."/>
            <person name="Li S."/>
            <person name="Ye C."/>
            <person name="Du Z."/>
            <person name="Lin W."/>
            <person name="Wang J."/>
            <person name="Yu J."/>
            <person name="Yang H."/>
            <person name="Wang J."/>
            <person name="Huang P."/>
            <person name="Yang R."/>
        </authorList>
    </citation>
    <scope>NUCLEOTIDE SEQUENCE [LARGE SCALE GENOMIC DNA]</scope>
    <source>
        <strain>91001 / Biovar Mediaevalis</strain>
    </source>
</reference>
<sequence>MPSFDIVSEIDMQEVRNAVENATRDLANRWDFRNVPASFELNEKNESIKVVSESDFQVEQLLDILRAQLSKRGIEGAALEIPEEMARSGKTYSVDAKLKQGIESVQAKKLVKLIKDSKLKVQAQIQGEQVRVTGKARDDLQAVMALVRAADLGQPFQFNNFRD</sequence>
<feature type="chain" id="PRO_0000106210" description="Nucleotide-binding protein YPO3170">
    <location>
        <begin position="1"/>
        <end position="163"/>
    </location>
</feature>
<dbReference type="EMBL" id="AL590842">
    <property type="protein sequence ID" value="CAL21765.1"/>
    <property type="status" value="ALT_INIT"/>
    <property type="molecule type" value="Genomic_DNA"/>
</dbReference>
<dbReference type="EMBL" id="AE009952">
    <property type="protein sequence ID" value="AAM84597.1"/>
    <property type="status" value="ALT_INIT"/>
    <property type="molecule type" value="Genomic_DNA"/>
</dbReference>
<dbReference type="EMBL" id="AE017042">
    <property type="protein sequence ID" value="AAS61026.1"/>
    <property type="status" value="ALT_INIT"/>
    <property type="molecule type" value="Genomic_DNA"/>
</dbReference>
<dbReference type="PIR" id="AB0385">
    <property type="entry name" value="AB0385"/>
</dbReference>
<dbReference type="RefSeq" id="WP_002208655.1">
    <property type="nucleotide sequence ID" value="NZ_WUCM01000043.1"/>
</dbReference>
<dbReference type="SMR" id="Q8ZC52"/>
<dbReference type="STRING" id="214092.YPO3170"/>
<dbReference type="PaxDb" id="214092-YPO3170"/>
<dbReference type="EnsemblBacteria" id="AAS61026">
    <property type="protein sequence ID" value="AAS61026"/>
    <property type="gene ID" value="YP_0761"/>
</dbReference>
<dbReference type="KEGG" id="ype:YPO3170"/>
<dbReference type="KEGG" id="ypk:y1016"/>
<dbReference type="KEGG" id="ypm:YP_0761"/>
<dbReference type="eggNOG" id="COG1666">
    <property type="taxonomic scope" value="Bacteria"/>
</dbReference>
<dbReference type="HOGENOM" id="CLU_099839_1_0_6"/>
<dbReference type="OMA" id="DFKGVGA"/>
<dbReference type="OrthoDB" id="9801447at2"/>
<dbReference type="Proteomes" id="UP000000815">
    <property type="component" value="Chromosome"/>
</dbReference>
<dbReference type="Proteomes" id="UP000001019">
    <property type="component" value="Chromosome"/>
</dbReference>
<dbReference type="Proteomes" id="UP000002490">
    <property type="component" value="Chromosome"/>
</dbReference>
<dbReference type="GO" id="GO:0005829">
    <property type="term" value="C:cytosol"/>
    <property type="evidence" value="ECO:0000318"/>
    <property type="project" value="GO_Central"/>
</dbReference>
<dbReference type="GO" id="GO:0000166">
    <property type="term" value="F:nucleotide binding"/>
    <property type="evidence" value="ECO:0000318"/>
    <property type="project" value="GO_Central"/>
</dbReference>
<dbReference type="CDD" id="cd11740">
    <property type="entry name" value="YajQ_like"/>
    <property type="match status" value="1"/>
</dbReference>
<dbReference type="FunFam" id="3.30.70.860:FF:000001">
    <property type="entry name" value="UPF0234 protein YajQ"/>
    <property type="match status" value="1"/>
</dbReference>
<dbReference type="FunFam" id="3.30.70.990:FF:000001">
    <property type="entry name" value="UPF0234 protein YajQ"/>
    <property type="match status" value="1"/>
</dbReference>
<dbReference type="Gene3D" id="3.30.70.860">
    <property type="match status" value="1"/>
</dbReference>
<dbReference type="Gene3D" id="3.30.70.990">
    <property type="entry name" value="YajQ-like, domain 2"/>
    <property type="match status" value="1"/>
</dbReference>
<dbReference type="HAMAP" id="MF_00632">
    <property type="entry name" value="YajQ"/>
    <property type="match status" value="1"/>
</dbReference>
<dbReference type="InterPro" id="IPR007551">
    <property type="entry name" value="DUF520"/>
</dbReference>
<dbReference type="InterPro" id="IPR035571">
    <property type="entry name" value="UPF0234-like_C"/>
</dbReference>
<dbReference type="InterPro" id="IPR035570">
    <property type="entry name" value="UPF0234_N"/>
</dbReference>
<dbReference type="InterPro" id="IPR036183">
    <property type="entry name" value="YajQ-like_sf"/>
</dbReference>
<dbReference type="NCBIfam" id="NF003819">
    <property type="entry name" value="PRK05412.1"/>
    <property type="match status" value="1"/>
</dbReference>
<dbReference type="PANTHER" id="PTHR30476">
    <property type="entry name" value="UPF0234 PROTEIN YAJQ"/>
    <property type="match status" value="1"/>
</dbReference>
<dbReference type="PANTHER" id="PTHR30476:SF0">
    <property type="entry name" value="UPF0234 PROTEIN YAJQ"/>
    <property type="match status" value="1"/>
</dbReference>
<dbReference type="Pfam" id="PF04461">
    <property type="entry name" value="DUF520"/>
    <property type="match status" value="1"/>
</dbReference>
<dbReference type="SUPFAM" id="SSF89963">
    <property type="entry name" value="YajQ-like"/>
    <property type="match status" value="2"/>
</dbReference>
<keyword id="KW-0547">Nucleotide-binding</keyword>
<keyword id="KW-1185">Reference proteome</keyword>
<evidence type="ECO:0000255" key="1">
    <source>
        <dbReference type="HAMAP-Rule" id="MF_00632"/>
    </source>
</evidence>
<evidence type="ECO:0000305" key="2"/>
<protein>
    <recommendedName>
        <fullName evidence="1">Nucleotide-binding protein YPO3170</fullName>
    </recommendedName>
</protein>
<proteinExistence type="inferred from homology"/>
<comment type="function">
    <text evidence="1">Nucleotide-binding protein.</text>
</comment>
<comment type="similarity">
    <text evidence="1">Belongs to the YajQ family.</text>
</comment>
<comment type="sequence caution" evidence="2">
    <conflict type="erroneous initiation">
        <sequence resource="EMBL-CDS" id="AAM84597"/>
    </conflict>
</comment>
<comment type="sequence caution" evidence="2">
    <conflict type="erroneous initiation">
        <sequence resource="EMBL-CDS" id="AAS61026"/>
    </conflict>
</comment>
<comment type="sequence caution" evidence="2">
    <conflict type="erroneous initiation">
        <sequence resource="EMBL-CDS" id="CAL21765"/>
    </conflict>
</comment>